<feature type="chain" id="PRO_1000119423" description="Small ribosomal subunit protein uS2">
    <location>
        <begin position="1"/>
        <end position="246"/>
    </location>
</feature>
<name>RS2_DICTD</name>
<organism>
    <name type="scientific">Dictyoglomus turgidum (strain DSM 6724 / Z-1310)</name>
    <dbReference type="NCBI Taxonomy" id="515635"/>
    <lineage>
        <taxon>Bacteria</taxon>
        <taxon>Pseudomonadati</taxon>
        <taxon>Dictyoglomota</taxon>
        <taxon>Dictyoglomia</taxon>
        <taxon>Dictyoglomales</taxon>
        <taxon>Dictyoglomaceae</taxon>
        <taxon>Dictyoglomus</taxon>
    </lineage>
</organism>
<protein>
    <recommendedName>
        <fullName evidence="1">Small ribosomal subunit protein uS2</fullName>
    </recommendedName>
    <alternativeName>
        <fullName evidence="2">30S ribosomal protein S2</fullName>
    </alternativeName>
</protein>
<evidence type="ECO:0000255" key="1">
    <source>
        <dbReference type="HAMAP-Rule" id="MF_00291"/>
    </source>
</evidence>
<evidence type="ECO:0000305" key="2"/>
<gene>
    <name evidence="1" type="primary">rpsB</name>
    <name type="ordered locus">Dtur_1203</name>
</gene>
<reference key="1">
    <citation type="journal article" date="2016" name="Front. Microbiol.">
        <title>The complete genome sequence of hyperthermophile Dictyoglomus turgidum DSM 6724 reveals a specialized carbohydrate fermentor.</title>
        <authorList>
            <person name="Brumm P.J."/>
            <person name="Gowda K."/>
            <person name="Robb F.T."/>
            <person name="Mead D.A."/>
        </authorList>
    </citation>
    <scope>NUCLEOTIDE SEQUENCE [LARGE SCALE GENOMIC DNA]</scope>
    <source>
        <strain>DSM 6724 / Z-1310</strain>
    </source>
</reference>
<sequence length="246" mass="28378">MAHILMKQLLEAGVHFGHQTKRWCPKMKEYIFSERNGIHIIDLQKTLVKLEEAYEFAKEQAKEGKTFLFVGTKKQAQQTIEEEAKRCGAFYVNQRWLGGMLTNFTTIKSRIDYMIKLEELKNNGYFDKLPKKQANRLNRELEKLIKVFDGLRGIERIPDVLYIVDPKREEIAVKEANKLGIPIIAIVDTNCDPELITYPIPGNDDAIRSIKLITSKIADAILEGRDLREKEADLQLKDEDLQSEIS</sequence>
<comment type="similarity">
    <text evidence="1">Belongs to the universal ribosomal protein uS2 family.</text>
</comment>
<proteinExistence type="inferred from homology"/>
<dbReference type="EMBL" id="CP001251">
    <property type="protein sequence ID" value="ACK42482.1"/>
    <property type="molecule type" value="Genomic_DNA"/>
</dbReference>
<dbReference type="RefSeq" id="WP_012583564.1">
    <property type="nucleotide sequence ID" value="NC_011661.1"/>
</dbReference>
<dbReference type="RefSeq" id="YP_002353096.1">
    <property type="nucleotide sequence ID" value="NC_011661.1"/>
</dbReference>
<dbReference type="SMR" id="B8E2Y2"/>
<dbReference type="FunCoup" id="B8E2Y2">
    <property type="interactions" value="401"/>
</dbReference>
<dbReference type="STRING" id="515635.Dtur_1203"/>
<dbReference type="EnsemblBacteria" id="ACK42482">
    <property type="protein sequence ID" value="ACK42482"/>
    <property type="gene ID" value="Dtur_1203"/>
</dbReference>
<dbReference type="KEGG" id="dtu:Dtur_1203"/>
<dbReference type="PATRIC" id="fig|515635.4.peg.1241"/>
<dbReference type="eggNOG" id="COG0052">
    <property type="taxonomic scope" value="Bacteria"/>
</dbReference>
<dbReference type="HOGENOM" id="CLU_040318_1_2_0"/>
<dbReference type="InParanoid" id="B8E2Y2"/>
<dbReference type="OrthoDB" id="9808036at2"/>
<dbReference type="Proteomes" id="UP000007719">
    <property type="component" value="Chromosome"/>
</dbReference>
<dbReference type="GO" id="GO:0022627">
    <property type="term" value="C:cytosolic small ribosomal subunit"/>
    <property type="evidence" value="ECO:0000318"/>
    <property type="project" value="GO_Central"/>
</dbReference>
<dbReference type="GO" id="GO:0003735">
    <property type="term" value="F:structural constituent of ribosome"/>
    <property type="evidence" value="ECO:0000318"/>
    <property type="project" value="GO_Central"/>
</dbReference>
<dbReference type="GO" id="GO:0006412">
    <property type="term" value="P:translation"/>
    <property type="evidence" value="ECO:0007669"/>
    <property type="project" value="UniProtKB-UniRule"/>
</dbReference>
<dbReference type="CDD" id="cd01425">
    <property type="entry name" value="RPS2"/>
    <property type="match status" value="1"/>
</dbReference>
<dbReference type="FunFam" id="1.10.287.610:FF:000001">
    <property type="entry name" value="30S ribosomal protein S2"/>
    <property type="match status" value="1"/>
</dbReference>
<dbReference type="Gene3D" id="3.40.50.10490">
    <property type="entry name" value="Glucose-6-phosphate isomerase like protein, domain 1"/>
    <property type="match status" value="1"/>
</dbReference>
<dbReference type="Gene3D" id="1.10.287.610">
    <property type="entry name" value="Helix hairpin bin"/>
    <property type="match status" value="1"/>
</dbReference>
<dbReference type="HAMAP" id="MF_00291_B">
    <property type="entry name" value="Ribosomal_uS2_B"/>
    <property type="match status" value="1"/>
</dbReference>
<dbReference type="InterPro" id="IPR001865">
    <property type="entry name" value="Ribosomal_uS2"/>
</dbReference>
<dbReference type="InterPro" id="IPR005706">
    <property type="entry name" value="Ribosomal_uS2_bac/mit/plastid"/>
</dbReference>
<dbReference type="InterPro" id="IPR018130">
    <property type="entry name" value="Ribosomal_uS2_CS"/>
</dbReference>
<dbReference type="InterPro" id="IPR023591">
    <property type="entry name" value="Ribosomal_uS2_flav_dom_sf"/>
</dbReference>
<dbReference type="NCBIfam" id="TIGR01011">
    <property type="entry name" value="rpsB_bact"/>
    <property type="match status" value="1"/>
</dbReference>
<dbReference type="PANTHER" id="PTHR12534">
    <property type="entry name" value="30S RIBOSOMAL PROTEIN S2 PROKARYOTIC AND ORGANELLAR"/>
    <property type="match status" value="1"/>
</dbReference>
<dbReference type="PANTHER" id="PTHR12534:SF0">
    <property type="entry name" value="SMALL RIBOSOMAL SUBUNIT PROTEIN US2M"/>
    <property type="match status" value="1"/>
</dbReference>
<dbReference type="Pfam" id="PF00318">
    <property type="entry name" value="Ribosomal_S2"/>
    <property type="match status" value="1"/>
</dbReference>
<dbReference type="PRINTS" id="PR00395">
    <property type="entry name" value="RIBOSOMALS2"/>
</dbReference>
<dbReference type="SUPFAM" id="SSF52313">
    <property type="entry name" value="Ribosomal protein S2"/>
    <property type="match status" value="1"/>
</dbReference>
<dbReference type="PROSITE" id="PS00962">
    <property type="entry name" value="RIBOSOMAL_S2_1"/>
    <property type="match status" value="1"/>
</dbReference>
<accession>B8E2Y2</accession>
<keyword id="KW-1185">Reference proteome</keyword>
<keyword id="KW-0687">Ribonucleoprotein</keyword>
<keyword id="KW-0689">Ribosomal protein</keyword>